<keyword id="KW-0027">Amidation</keyword>
<keyword id="KW-0903">Direct protein sequencing</keyword>
<keyword id="KW-0527">Neuropeptide</keyword>
<keyword id="KW-0964">Secreted</keyword>
<organism>
    <name type="scientific">Lucilia cuprina</name>
    <name type="common">Green bottle fly</name>
    <name type="synonym">Australian sheep blowfly</name>
    <dbReference type="NCBI Taxonomy" id="7375"/>
    <lineage>
        <taxon>Eukaryota</taxon>
        <taxon>Metazoa</taxon>
        <taxon>Ecdysozoa</taxon>
        <taxon>Arthropoda</taxon>
        <taxon>Hexapoda</taxon>
        <taxon>Insecta</taxon>
        <taxon>Pterygota</taxon>
        <taxon>Neoptera</taxon>
        <taxon>Endopterygota</taxon>
        <taxon>Diptera</taxon>
        <taxon>Brachycera</taxon>
        <taxon>Muscomorpha</taxon>
        <taxon>Oestroidea</taxon>
        <taxon>Calliphoridae</taxon>
        <taxon>Luciliinae</taxon>
        <taxon>Lucilia</taxon>
    </lineage>
</organism>
<sequence length="9" mass="1114">SPSQDFMRF</sequence>
<comment type="subcellular location">
    <subcellularLocation>
        <location evidence="4">Secreted</location>
    </subcellularLocation>
</comment>
<comment type="tissue specificity">
    <text evidence="2">Detected in the thoracic perisympathetic organs in larvae, and the dorsal ganglionic sheath in adults (at protein level).</text>
</comment>
<comment type="mass spectrometry" mass="1113.51" method="MALDI" evidence="2"/>
<comment type="similarity">
    <text evidence="1">Belongs to the FARP (FMRFamide related peptide) family.</text>
</comment>
<dbReference type="GO" id="GO:0005576">
    <property type="term" value="C:extracellular region"/>
    <property type="evidence" value="ECO:0007669"/>
    <property type="project" value="UniProtKB-SubCell"/>
</dbReference>
<dbReference type="GO" id="GO:0007218">
    <property type="term" value="P:neuropeptide signaling pathway"/>
    <property type="evidence" value="ECO:0007669"/>
    <property type="project" value="UniProtKB-KW"/>
</dbReference>
<evidence type="ECO:0000255" key="1"/>
<evidence type="ECO:0000269" key="2">
    <source>
    </source>
</evidence>
<evidence type="ECO:0000303" key="3">
    <source>
    </source>
</evidence>
<evidence type="ECO:0000305" key="4"/>
<feature type="peptide" id="PRO_0000371754" description="FMRFamide-9/10/11/12">
    <location>
        <begin position="1"/>
        <end position="9"/>
    </location>
</feature>
<feature type="modified residue" description="Phenylalanine amide" evidence="2">
    <location>
        <position position="9"/>
    </location>
</feature>
<accession>P85456</accession>
<name>FAR9_LUCCU</name>
<proteinExistence type="evidence at protein level"/>
<protein>
    <recommendedName>
        <fullName>FMRFamide-9/10/11/12</fullName>
    </recommendedName>
    <alternativeName>
        <fullName evidence="3">LucFMRFamide-10</fullName>
    </alternativeName>
    <alternativeName>
        <fullName evidence="3">LucFMRFamide-11</fullName>
    </alternativeName>
    <alternativeName>
        <fullName evidence="3">LucFMRFamide-12</fullName>
    </alternativeName>
    <alternativeName>
        <fullName evidence="3">LucFMRFamide-9</fullName>
    </alternativeName>
</protein>
<reference evidence="4" key="1">
    <citation type="journal article" date="2009" name="Gen. Comp. Endocrinol.">
        <title>Extended FMRFamides in dipteran insects: conservative expression in the neuroendocrine system is accompanied by rapid sequence evolution.</title>
        <authorList>
            <person name="Rahman M.M."/>
            <person name="Fromm B."/>
            <person name="Neupert S."/>
            <person name="Kreusch S."/>
            <person name="Predel R."/>
        </authorList>
    </citation>
    <scope>PROTEIN SEQUENCE</scope>
    <scope>TISSUE SPECIFICITY</scope>
    <scope>MASS SPECTROMETRY</scope>
    <scope>AMIDATION AT PHE-9</scope>
    <source>
        <strain evidence="2">Bangladesh</strain>
        <strain evidence="2">Goondiwindi</strain>
        <tissue evidence="2">Dorsal ganglionic sheath</tissue>
    </source>
</reference>